<organism>
    <name type="scientific">Streptococcus thermophilus (strain CNRZ 1066)</name>
    <dbReference type="NCBI Taxonomy" id="299768"/>
    <lineage>
        <taxon>Bacteria</taxon>
        <taxon>Bacillati</taxon>
        <taxon>Bacillota</taxon>
        <taxon>Bacilli</taxon>
        <taxon>Lactobacillales</taxon>
        <taxon>Streptococcaceae</taxon>
        <taxon>Streptococcus</taxon>
    </lineage>
</organism>
<feature type="chain" id="PRO_0000227262" description="Arginine biosynthesis bifunctional protein ArgJ alpha chain" evidence="1">
    <location>
        <begin position="1"/>
        <end position="183"/>
    </location>
</feature>
<feature type="chain" id="PRO_0000227263" description="Arginine biosynthesis bifunctional protein ArgJ beta chain" evidence="1">
    <location>
        <begin position="184"/>
        <end position="397"/>
    </location>
</feature>
<feature type="active site" description="Nucleophile" evidence="1">
    <location>
        <position position="184"/>
    </location>
</feature>
<feature type="binding site" evidence="1">
    <location>
        <position position="147"/>
    </location>
    <ligand>
        <name>substrate</name>
    </ligand>
</feature>
<feature type="binding site" evidence="1">
    <location>
        <position position="173"/>
    </location>
    <ligand>
        <name>substrate</name>
    </ligand>
</feature>
<feature type="binding site" evidence="1">
    <location>
        <position position="184"/>
    </location>
    <ligand>
        <name>substrate</name>
    </ligand>
</feature>
<feature type="binding site" evidence="1">
    <location>
        <position position="270"/>
    </location>
    <ligand>
        <name>substrate</name>
    </ligand>
</feature>
<feature type="binding site" evidence="1">
    <location>
        <position position="392"/>
    </location>
    <ligand>
        <name>substrate</name>
    </ligand>
</feature>
<feature type="binding site" evidence="1">
    <location>
        <position position="397"/>
    </location>
    <ligand>
        <name>substrate</name>
    </ligand>
</feature>
<feature type="site" description="Involved in the stabilization of negative charge on the oxyanion by the formation of the oxyanion hole" evidence="1">
    <location>
        <position position="113"/>
    </location>
</feature>
<feature type="site" description="Involved in the stabilization of negative charge on the oxyanion by the formation of the oxyanion hole" evidence="1">
    <location>
        <position position="114"/>
    </location>
</feature>
<feature type="site" description="Cleavage; by autolysis" evidence="1">
    <location>
        <begin position="183"/>
        <end position="184"/>
    </location>
</feature>
<comment type="function">
    <text evidence="1">Catalyzes two activities which are involved in the cyclic version of arginine biosynthesis: the synthesis of N-acetylglutamate from glutamate and acetyl-CoA as the acetyl donor, and of ornithine by transacetylation between N(2)-acetylornithine and glutamate.</text>
</comment>
<comment type="catalytic activity">
    <reaction evidence="1">
        <text>N(2)-acetyl-L-ornithine + L-glutamate = N-acetyl-L-glutamate + L-ornithine</text>
        <dbReference type="Rhea" id="RHEA:15349"/>
        <dbReference type="ChEBI" id="CHEBI:29985"/>
        <dbReference type="ChEBI" id="CHEBI:44337"/>
        <dbReference type="ChEBI" id="CHEBI:46911"/>
        <dbReference type="ChEBI" id="CHEBI:57805"/>
        <dbReference type="EC" id="2.3.1.35"/>
    </reaction>
</comment>
<comment type="catalytic activity">
    <reaction evidence="1">
        <text>L-glutamate + acetyl-CoA = N-acetyl-L-glutamate + CoA + H(+)</text>
        <dbReference type="Rhea" id="RHEA:24292"/>
        <dbReference type="ChEBI" id="CHEBI:15378"/>
        <dbReference type="ChEBI" id="CHEBI:29985"/>
        <dbReference type="ChEBI" id="CHEBI:44337"/>
        <dbReference type="ChEBI" id="CHEBI:57287"/>
        <dbReference type="ChEBI" id="CHEBI:57288"/>
        <dbReference type="EC" id="2.3.1.1"/>
    </reaction>
</comment>
<comment type="pathway">
    <text evidence="1">Amino-acid biosynthesis; L-arginine biosynthesis; L-ornithine and N-acetyl-L-glutamate from L-glutamate and N(2)-acetyl-L-ornithine (cyclic): step 1/1.</text>
</comment>
<comment type="pathway">
    <text evidence="1">Amino-acid biosynthesis; L-arginine biosynthesis; N(2)-acetyl-L-ornithine from L-glutamate: step 1/4.</text>
</comment>
<comment type="subunit">
    <text evidence="1">Heterotetramer of two alpha and two beta chains.</text>
</comment>
<comment type="subcellular location">
    <subcellularLocation>
        <location evidence="1">Cytoplasm</location>
    </subcellularLocation>
</comment>
<comment type="similarity">
    <text evidence="1">Belongs to the ArgJ family.</text>
</comment>
<proteinExistence type="inferred from homology"/>
<gene>
    <name evidence="1" type="primary">argJ</name>
    <name type="ordered locus">str0465</name>
</gene>
<accession>Q5M122</accession>
<reference key="1">
    <citation type="journal article" date="2004" name="Nat. Biotechnol.">
        <title>Complete sequence and comparative genome analysis of the dairy bacterium Streptococcus thermophilus.</title>
        <authorList>
            <person name="Bolotin A."/>
            <person name="Quinquis B."/>
            <person name="Renault P."/>
            <person name="Sorokin A."/>
            <person name="Ehrlich S.D."/>
            <person name="Kulakauskas S."/>
            <person name="Lapidus A."/>
            <person name="Goltsman E."/>
            <person name="Mazur M."/>
            <person name="Pusch G.D."/>
            <person name="Fonstein M."/>
            <person name="Overbeek R."/>
            <person name="Kyprides N."/>
            <person name="Purnelle B."/>
            <person name="Prozzi D."/>
            <person name="Ngui K."/>
            <person name="Masuy D."/>
            <person name="Hancy F."/>
            <person name="Burteau S."/>
            <person name="Boutry M."/>
            <person name="Delcour J."/>
            <person name="Goffeau A."/>
            <person name="Hols P."/>
        </authorList>
    </citation>
    <scope>NUCLEOTIDE SEQUENCE [LARGE SCALE GENOMIC DNA]</scope>
    <source>
        <strain>CNRZ 1066</strain>
    </source>
</reference>
<sequence length="397" mass="42117">MKVIDGTIASPLGFSADGLHAGFKKRKMDFGWIVSEKPASVAGVYTTNKVIAAPLIVTKTSVKKAGKMRAIVVNSGVANSCTGTQGLEDAYTMQEWTAEKLGVEPDMIGVASTGIIGELLPMDTLKNGLSKLVVNGNANDFAKAILTTDTATKTIAVTETFGRDVVTMAGVAKGSGMIHPNMATMLGFITCDANISSDTLQLALSQNVEKTFNQITVDGDTSTNDMVLVMSNGCALNDEILPDTPEFDKFSKMLNFVMQELAKKIAKDGEGANKLIQVDVVNAPNALDARMMAKSVVGSSLVKTAIFGEDPNWGRILAAVGYAGVDVPVDNVDIMLGGLPVMLASSPVTFDDEEMKDIMHGDEVTITVDLHSGQEKGTAWGCDLSYDYVKINALYHT</sequence>
<name>ARGJ_STRT1</name>
<keyword id="KW-0012">Acyltransferase</keyword>
<keyword id="KW-0028">Amino-acid biosynthesis</keyword>
<keyword id="KW-0055">Arginine biosynthesis</keyword>
<keyword id="KW-0068">Autocatalytic cleavage</keyword>
<keyword id="KW-0963">Cytoplasm</keyword>
<keyword id="KW-0511">Multifunctional enzyme</keyword>
<keyword id="KW-0808">Transferase</keyword>
<evidence type="ECO:0000255" key="1">
    <source>
        <dbReference type="HAMAP-Rule" id="MF_01106"/>
    </source>
</evidence>
<dbReference type="EC" id="2.3.1.35" evidence="1"/>
<dbReference type="EC" id="2.3.1.1" evidence="1"/>
<dbReference type="EMBL" id="CP000024">
    <property type="protein sequence ID" value="AAV62065.1"/>
    <property type="molecule type" value="Genomic_DNA"/>
</dbReference>
<dbReference type="RefSeq" id="WP_002949910.1">
    <property type="nucleotide sequence ID" value="NC_006449.1"/>
</dbReference>
<dbReference type="SMR" id="Q5M122"/>
<dbReference type="MEROPS" id="T05.002"/>
<dbReference type="GeneID" id="66898376"/>
<dbReference type="KEGG" id="stc:str0465"/>
<dbReference type="HOGENOM" id="CLU_027172_1_0_9"/>
<dbReference type="UniPathway" id="UPA00068">
    <property type="reaction ID" value="UER00106"/>
</dbReference>
<dbReference type="UniPathway" id="UPA00068">
    <property type="reaction ID" value="UER00111"/>
</dbReference>
<dbReference type="GO" id="GO:0005737">
    <property type="term" value="C:cytoplasm"/>
    <property type="evidence" value="ECO:0007669"/>
    <property type="project" value="UniProtKB-SubCell"/>
</dbReference>
<dbReference type="GO" id="GO:0004358">
    <property type="term" value="F:glutamate N-acetyltransferase activity"/>
    <property type="evidence" value="ECO:0007669"/>
    <property type="project" value="UniProtKB-UniRule"/>
</dbReference>
<dbReference type="GO" id="GO:0004042">
    <property type="term" value="F:L-glutamate N-acetyltransferase activity"/>
    <property type="evidence" value="ECO:0007669"/>
    <property type="project" value="UniProtKB-UniRule"/>
</dbReference>
<dbReference type="GO" id="GO:0006526">
    <property type="term" value="P:L-arginine biosynthetic process"/>
    <property type="evidence" value="ECO:0007669"/>
    <property type="project" value="UniProtKB-UniRule"/>
</dbReference>
<dbReference type="GO" id="GO:0006592">
    <property type="term" value="P:ornithine biosynthetic process"/>
    <property type="evidence" value="ECO:0007669"/>
    <property type="project" value="TreeGrafter"/>
</dbReference>
<dbReference type="CDD" id="cd02152">
    <property type="entry name" value="OAT"/>
    <property type="match status" value="1"/>
</dbReference>
<dbReference type="FunFam" id="3.10.20.340:FF:000001">
    <property type="entry name" value="Arginine biosynthesis bifunctional protein ArgJ, chloroplastic"/>
    <property type="match status" value="1"/>
</dbReference>
<dbReference type="FunFam" id="3.60.70.12:FF:000001">
    <property type="entry name" value="Arginine biosynthesis bifunctional protein ArgJ, chloroplastic"/>
    <property type="match status" value="1"/>
</dbReference>
<dbReference type="Gene3D" id="3.10.20.340">
    <property type="entry name" value="ArgJ beta chain, C-terminal domain"/>
    <property type="match status" value="1"/>
</dbReference>
<dbReference type="Gene3D" id="3.60.70.12">
    <property type="entry name" value="L-amino peptidase D-ALA esterase/amidase"/>
    <property type="match status" value="1"/>
</dbReference>
<dbReference type="HAMAP" id="MF_01106">
    <property type="entry name" value="ArgJ"/>
    <property type="match status" value="1"/>
</dbReference>
<dbReference type="InterPro" id="IPR002813">
    <property type="entry name" value="Arg_biosynth_ArgJ"/>
</dbReference>
<dbReference type="InterPro" id="IPR016117">
    <property type="entry name" value="ArgJ-like_dom_sf"/>
</dbReference>
<dbReference type="InterPro" id="IPR042195">
    <property type="entry name" value="ArgJ_beta_C"/>
</dbReference>
<dbReference type="NCBIfam" id="TIGR00120">
    <property type="entry name" value="ArgJ"/>
    <property type="match status" value="1"/>
</dbReference>
<dbReference type="NCBIfam" id="NF003802">
    <property type="entry name" value="PRK05388.1"/>
    <property type="match status" value="1"/>
</dbReference>
<dbReference type="PANTHER" id="PTHR23100">
    <property type="entry name" value="ARGININE BIOSYNTHESIS BIFUNCTIONAL PROTEIN ARGJ"/>
    <property type="match status" value="1"/>
</dbReference>
<dbReference type="PANTHER" id="PTHR23100:SF0">
    <property type="entry name" value="ARGININE BIOSYNTHESIS BIFUNCTIONAL PROTEIN ARGJ, MITOCHONDRIAL"/>
    <property type="match status" value="1"/>
</dbReference>
<dbReference type="Pfam" id="PF01960">
    <property type="entry name" value="ArgJ"/>
    <property type="match status" value="1"/>
</dbReference>
<dbReference type="SUPFAM" id="SSF56266">
    <property type="entry name" value="DmpA/ArgJ-like"/>
    <property type="match status" value="1"/>
</dbReference>
<protein>
    <recommendedName>
        <fullName evidence="1">Arginine biosynthesis bifunctional protein ArgJ</fullName>
    </recommendedName>
    <domain>
        <recommendedName>
            <fullName evidence="1">Glutamate N-acetyltransferase</fullName>
            <ecNumber evidence="1">2.3.1.35</ecNumber>
        </recommendedName>
        <alternativeName>
            <fullName evidence="1">Ornithine acetyltransferase</fullName>
            <shortName evidence="1">OATase</shortName>
        </alternativeName>
        <alternativeName>
            <fullName evidence="1">Ornithine transacetylase</fullName>
        </alternativeName>
    </domain>
    <domain>
        <recommendedName>
            <fullName evidence="1">Amino-acid acetyltransferase</fullName>
            <ecNumber evidence="1">2.3.1.1</ecNumber>
        </recommendedName>
        <alternativeName>
            <fullName evidence="1">N-acetylglutamate synthase</fullName>
            <shortName evidence="1">AGSase</shortName>
        </alternativeName>
    </domain>
    <component>
        <recommendedName>
            <fullName evidence="1">Arginine biosynthesis bifunctional protein ArgJ alpha chain</fullName>
        </recommendedName>
    </component>
    <component>
        <recommendedName>
            <fullName evidence="1">Arginine biosynthesis bifunctional protein ArgJ beta chain</fullName>
        </recommendedName>
    </component>
</protein>